<protein>
    <recommendedName>
        <fullName evidence="1">Holliday junction branch migration complex subunit RuvB</fullName>
        <ecNumber evidence="1">3.6.4.-</ecNumber>
    </recommendedName>
</protein>
<evidence type="ECO:0000255" key="1">
    <source>
        <dbReference type="HAMAP-Rule" id="MF_00016"/>
    </source>
</evidence>
<organism>
    <name type="scientific">Burkholderia orbicola (strain MC0-3)</name>
    <dbReference type="NCBI Taxonomy" id="406425"/>
    <lineage>
        <taxon>Bacteria</taxon>
        <taxon>Pseudomonadati</taxon>
        <taxon>Pseudomonadota</taxon>
        <taxon>Betaproteobacteria</taxon>
        <taxon>Burkholderiales</taxon>
        <taxon>Burkholderiaceae</taxon>
        <taxon>Burkholderia</taxon>
        <taxon>Burkholderia cepacia complex</taxon>
        <taxon>Burkholderia orbicola</taxon>
    </lineage>
</organism>
<proteinExistence type="inferred from homology"/>
<accession>B1JVV3</accession>
<gene>
    <name evidence="1" type="primary">ruvB</name>
    <name type="ordered locus">Bcenmc03_0655</name>
</gene>
<keyword id="KW-0067">ATP-binding</keyword>
<keyword id="KW-0963">Cytoplasm</keyword>
<keyword id="KW-0227">DNA damage</keyword>
<keyword id="KW-0233">DNA recombination</keyword>
<keyword id="KW-0234">DNA repair</keyword>
<keyword id="KW-0238">DNA-binding</keyword>
<keyword id="KW-0378">Hydrolase</keyword>
<keyword id="KW-0547">Nucleotide-binding</keyword>
<comment type="function">
    <text evidence="1">The RuvA-RuvB-RuvC complex processes Holliday junction (HJ) DNA during genetic recombination and DNA repair, while the RuvA-RuvB complex plays an important role in the rescue of blocked DNA replication forks via replication fork reversal (RFR). RuvA specifically binds to HJ cruciform DNA, conferring on it an open structure. The RuvB hexamer acts as an ATP-dependent pump, pulling dsDNA into and through the RuvAB complex. RuvB forms 2 homohexamers on either side of HJ DNA bound by 1 or 2 RuvA tetramers; 4 subunits per hexamer contact DNA at a time. Coordinated motions by a converter formed by DNA-disengaged RuvB subunits stimulates ATP hydrolysis and nucleotide exchange. Immobilization of the converter enables RuvB to convert the ATP-contained energy into a lever motion, pulling 2 nucleotides of DNA out of the RuvA tetramer per ATP hydrolyzed, thus driving DNA branch migration. The RuvB motors rotate together with the DNA substrate, which together with the progressing nucleotide cycle form the mechanistic basis for DNA recombination by continuous HJ branch migration. Branch migration allows RuvC to scan DNA until it finds its consensus sequence, where it cleaves and resolves cruciform DNA.</text>
</comment>
<comment type="catalytic activity">
    <reaction evidence="1">
        <text>ATP + H2O = ADP + phosphate + H(+)</text>
        <dbReference type="Rhea" id="RHEA:13065"/>
        <dbReference type="ChEBI" id="CHEBI:15377"/>
        <dbReference type="ChEBI" id="CHEBI:15378"/>
        <dbReference type="ChEBI" id="CHEBI:30616"/>
        <dbReference type="ChEBI" id="CHEBI:43474"/>
        <dbReference type="ChEBI" id="CHEBI:456216"/>
    </reaction>
</comment>
<comment type="subunit">
    <text evidence="1">Homohexamer. Forms an RuvA(8)-RuvB(12)-Holliday junction (HJ) complex. HJ DNA is sandwiched between 2 RuvA tetramers; dsDNA enters through RuvA and exits via RuvB. An RuvB hexamer assembles on each DNA strand where it exits the tetramer. Each RuvB hexamer is contacted by two RuvA subunits (via domain III) on 2 adjacent RuvB subunits; this complex drives branch migration. In the full resolvosome a probable DNA-RuvA(4)-RuvB(12)-RuvC(2) complex forms which resolves the HJ.</text>
</comment>
<comment type="subcellular location">
    <subcellularLocation>
        <location evidence="1">Cytoplasm</location>
    </subcellularLocation>
</comment>
<comment type="domain">
    <text evidence="1">Has 3 domains, the large (RuvB-L) and small ATPase (RuvB-S) domains and the C-terminal head (RuvB-H) domain. The head domain binds DNA, while the ATPase domains jointly bind ATP, ADP or are empty depending on the state of the subunit in the translocation cycle. During a single DNA translocation step the structure of each domain remains the same, but their relative positions change.</text>
</comment>
<comment type="similarity">
    <text evidence="1">Belongs to the RuvB family.</text>
</comment>
<feature type="chain" id="PRO_1000089622" description="Holliday junction branch migration complex subunit RuvB">
    <location>
        <begin position="1"/>
        <end position="356"/>
    </location>
</feature>
<feature type="region of interest" description="Large ATPase domain (RuvB-L)" evidence="1">
    <location>
        <begin position="4"/>
        <end position="191"/>
    </location>
</feature>
<feature type="region of interest" description="Small ATPAse domain (RuvB-S)" evidence="1">
    <location>
        <begin position="192"/>
        <end position="262"/>
    </location>
</feature>
<feature type="region of interest" description="Head domain (RuvB-H)" evidence="1">
    <location>
        <begin position="265"/>
        <end position="356"/>
    </location>
</feature>
<feature type="binding site" evidence="1">
    <location>
        <position position="30"/>
    </location>
    <ligand>
        <name>ATP</name>
        <dbReference type="ChEBI" id="CHEBI:30616"/>
    </ligand>
</feature>
<feature type="binding site" evidence="1">
    <location>
        <position position="31"/>
    </location>
    <ligand>
        <name>ATP</name>
        <dbReference type="ChEBI" id="CHEBI:30616"/>
    </ligand>
</feature>
<feature type="binding site" evidence="1">
    <location>
        <position position="72"/>
    </location>
    <ligand>
        <name>ATP</name>
        <dbReference type="ChEBI" id="CHEBI:30616"/>
    </ligand>
</feature>
<feature type="binding site" evidence="1">
    <location>
        <position position="75"/>
    </location>
    <ligand>
        <name>ATP</name>
        <dbReference type="ChEBI" id="CHEBI:30616"/>
    </ligand>
</feature>
<feature type="binding site" evidence="1">
    <location>
        <position position="76"/>
    </location>
    <ligand>
        <name>ATP</name>
        <dbReference type="ChEBI" id="CHEBI:30616"/>
    </ligand>
</feature>
<feature type="binding site" evidence="1">
    <location>
        <position position="76"/>
    </location>
    <ligand>
        <name>Mg(2+)</name>
        <dbReference type="ChEBI" id="CHEBI:18420"/>
    </ligand>
</feature>
<feature type="binding site" evidence="1">
    <location>
        <position position="77"/>
    </location>
    <ligand>
        <name>ATP</name>
        <dbReference type="ChEBI" id="CHEBI:30616"/>
    </ligand>
</feature>
<feature type="binding site" evidence="1">
    <location>
        <begin position="138"/>
        <end position="140"/>
    </location>
    <ligand>
        <name>ATP</name>
        <dbReference type="ChEBI" id="CHEBI:30616"/>
    </ligand>
</feature>
<feature type="binding site" evidence="1">
    <location>
        <position position="181"/>
    </location>
    <ligand>
        <name>ATP</name>
        <dbReference type="ChEBI" id="CHEBI:30616"/>
    </ligand>
</feature>
<feature type="binding site" evidence="1">
    <location>
        <position position="191"/>
    </location>
    <ligand>
        <name>ATP</name>
        <dbReference type="ChEBI" id="CHEBI:30616"/>
    </ligand>
</feature>
<feature type="binding site" evidence="1">
    <location>
        <position position="228"/>
    </location>
    <ligand>
        <name>ATP</name>
        <dbReference type="ChEBI" id="CHEBI:30616"/>
    </ligand>
</feature>
<feature type="binding site" evidence="1">
    <location>
        <position position="301"/>
    </location>
    <ligand>
        <name>DNA</name>
        <dbReference type="ChEBI" id="CHEBI:16991"/>
    </ligand>
</feature>
<feature type="binding site" evidence="1">
    <location>
        <position position="320"/>
    </location>
    <ligand>
        <name>DNA</name>
        <dbReference type="ChEBI" id="CHEBI:16991"/>
    </ligand>
</feature>
<feature type="binding site" evidence="1">
    <location>
        <position position="325"/>
    </location>
    <ligand>
        <name>DNA</name>
        <dbReference type="ChEBI" id="CHEBI:16991"/>
    </ligand>
</feature>
<dbReference type="EC" id="3.6.4.-" evidence="1"/>
<dbReference type="EMBL" id="CP000958">
    <property type="protein sequence ID" value="ACA89833.1"/>
    <property type="molecule type" value="Genomic_DNA"/>
</dbReference>
<dbReference type="RefSeq" id="WP_006476896.1">
    <property type="nucleotide sequence ID" value="NC_010508.1"/>
</dbReference>
<dbReference type="SMR" id="B1JVV3"/>
<dbReference type="GeneID" id="83047455"/>
<dbReference type="KEGG" id="bcm:Bcenmc03_0655"/>
<dbReference type="HOGENOM" id="CLU_055599_1_0_4"/>
<dbReference type="Proteomes" id="UP000002169">
    <property type="component" value="Chromosome 1"/>
</dbReference>
<dbReference type="GO" id="GO:0005737">
    <property type="term" value="C:cytoplasm"/>
    <property type="evidence" value="ECO:0007669"/>
    <property type="project" value="UniProtKB-SubCell"/>
</dbReference>
<dbReference type="GO" id="GO:0048476">
    <property type="term" value="C:Holliday junction resolvase complex"/>
    <property type="evidence" value="ECO:0007669"/>
    <property type="project" value="UniProtKB-UniRule"/>
</dbReference>
<dbReference type="GO" id="GO:0005524">
    <property type="term" value="F:ATP binding"/>
    <property type="evidence" value="ECO:0007669"/>
    <property type="project" value="UniProtKB-UniRule"/>
</dbReference>
<dbReference type="GO" id="GO:0016887">
    <property type="term" value="F:ATP hydrolysis activity"/>
    <property type="evidence" value="ECO:0007669"/>
    <property type="project" value="InterPro"/>
</dbReference>
<dbReference type="GO" id="GO:0000400">
    <property type="term" value="F:four-way junction DNA binding"/>
    <property type="evidence" value="ECO:0007669"/>
    <property type="project" value="UniProtKB-UniRule"/>
</dbReference>
<dbReference type="GO" id="GO:0009378">
    <property type="term" value="F:four-way junction helicase activity"/>
    <property type="evidence" value="ECO:0007669"/>
    <property type="project" value="InterPro"/>
</dbReference>
<dbReference type="GO" id="GO:0006310">
    <property type="term" value="P:DNA recombination"/>
    <property type="evidence" value="ECO:0007669"/>
    <property type="project" value="UniProtKB-UniRule"/>
</dbReference>
<dbReference type="GO" id="GO:0006281">
    <property type="term" value="P:DNA repair"/>
    <property type="evidence" value="ECO:0007669"/>
    <property type="project" value="UniProtKB-UniRule"/>
</dbReference>
<dbReference type="CDD" id="cd00009">
    <property type="entry name" value="AAA"/>
    <property type="match status" value="1"/>
</dbReference>
<dbReference type="FunFam" id="1.10.10.10:FF:000086">
    <property type="entry name" value="Holliday junction ATP-dependent DNA helicase RuvB"/>
    <property type="match status" value="1"/>
</dbReference>
<dbReference type="FunFam" id="1.10.8.60:FF:000023">
    <property type="entry name" value="Holliday junction ATP-dependent DNA helicase RuvB"/>
    <property type="match status" value="1"/>
</dbReference>
<dbReference type="FunFam" id="3.40.50.300:FF:000073">
    <property type="entry name" value="Holliday junction ATP-dependent DNA helicase RuvB"/>
    <property type="match status" value="1"/>
</dbReference>
<dbReference type="Gene3D" id="1.10.8.60">
    <property type="match status" value="1"/>
</dbReference>
<dbReference type="Gene3D" id="3.40.50.300">
    <property type="entry name" value="P-loop containing nucleotide triphosphate hydrolases"/>
    <property type="match status" value="1"/>
</dbReference>
<dbReference type="Gene3D" id="1.10.10.10">
    <property type="entry name" value="Winged helix-like DNA-binding domain superfamily/Winged helix DNA-binding domain"/>
    <property type="match status" value="1"/>
</dbReference>
<dbReference type="HAMAP" id="MF_00016">
    <property type="entry name" value="DNA_HJ_migration_RuvB"/>
    <property type="match status" value="1"/>
</dbReference>
<dbReference type="InterPro" id="IPR003593">
    <property type="entry name" value="AAA+_ATPase"/>
</dbReference>
<dbReference type="InterPro" id="IPR041445">
    <property type="entry name" value="AAA_lid_4"/>
</dbReference>
<dbReference type="InterPro" id="IPR004605">
    <property type="entry name" value="DNA_helicase_Holl-junc_RuvB"/>
</dbReference>
<dbReference type="InterPro" id="IPR027417">
    <property type="entry name" value="P-loop_NTPase"/>
</dbReference>
<dbReference type="InterPro" id="IPR008824">
    <property type="entry name" value="RuvB-like_N"/>
</dbReference>
<dbReference type="InterPro" id="IPR008823">
    <property type="entry name" value="RuvB_C"/>
</dbReference>
<dbReference type="InterPro" id="IPR036388">
    <property type="entry name" value="WH-like_DNA-bd_sf"/>
</dbReference>
<dbReference type="InterPro" id="IPR036390">
    <property type="entry name" value="WH_DNA-bd_sf"/>
</dbReference>
<dbReference type="NCBIfam" id="NF000868">
    <property type="entry name" value="PRK00080.1"/>
    <property type="match status" value="1"/>
</dbReference>
<dbReference type="NCBIfam" id="TIGR00635">
    <property type="entry name" value="ruvB"/>
    <property type="match status" value="1"/>
</dbReference>
<dbReference type="PANTHER" id="PTHR42848">
    <property type="match status" value="1"/>
</dbReference>
<dbReference type="PANTHER" id="PTHR42848:SF1">
    <property type="entry name" value="HOLLIDAY JUNCTION BRANCH MIGRATION COMPLEX SUBUNIT RUVB"/>
    <property type="match status" value="1"/>
</dbReference>
<dbReference type="Pfam" id="PF17864">
    <property type="entry name" value="AAA_lid_4"/>
    <property type="match status" value="1"/>
</dbReference>
<dbReference type="Pfam" id="PF05491">
    <property type="entry name" value="RuvB_C"/>
    <property type="match status" value="1"/>
</dbReference>
<dbReference type="Pfam" id="PF05496">
    <property type="entry name" value="RuvB_N"/>
    <property type="match status" value="1"/>
</dbReference>
<dbReference type="SMART" id="SM00382">
    <property type="entry name" value="AAA"/>
    <property type="match status" value="1"/>
</dbReference>
<dbReference type="SUPFAM" id="SSF52540">
    <property type="entry name" value="P-loop containing nucleoside triphosphate hydrolases"/>
    <property type="match status" value="1"/>
</dbReference>
<dbReference type="SUPFAM" id="SSF46785">
    <property type="entry name" value="Winged helix' DNA-binding domain"/>
    <property type="match status" value="1"/>
</dbReference>
<reference key="1">
    <citation type="submission" date="2008-02" db="EMBL/GenBank/DDBJ databases">
        <title>Complete sequence of chromosome 1 of Burkholderia cenocepacia MC0-3.</title>
        <authorList>
            <person name="Copeland A."/>
            <person name="Lucas S."/>
            <person name="Lapidus A."/>
            <person name="Barry K."/>
            <person name="Bruce D."/>
            <person name="Goodwin L."/>
            <person name="Glavina del Rio T."/>
            <person name="Dalin E."/>
            <person name="Tice H."/>
            <person name="Pitluck S."/>
            <person name="Chain P."/>
            <person name="Malfatti S."/>
            <person name="Shin M."/>
            <person name="Vergez L."/>
            <person name="Schmutz J."/>
            <person name="Larimer F."/>
            <person name="Land M."/>
            <person name="Hauser L."/>
            <person name="Kyrpides N."/>
            <person name="Mikhailova N."/>
            <person name="Tiedje J."/>
            <person name="Richardson P."/>
        </authorList>
    </citation>
    <scope>NUCLEOTIDE SEQUENCE [LARGE SCALE GENOMIC DNA]</scope>
    <source>
        <strain>MC0-3</strain>
    </source>
</reference>
<name>RUVB_BURO0</name>
<sequence length="356" mass="39532">MIETDKLATEQRIIAATPASSHEEVFERALRPRQLDDYVGQEKVRGQLEIFIEAAKRRSEPLDHVLLFGPPGLGKTTLAHIIAREMGVNLRQTSGPVLERAGDLAALLTNLEANDVLFIDEIHRLSPVVEEILYPALEDYQIDIMIGEGPAARSVKLDLQPFTLVGATTRAGMLTNPLRDRFGIVARLEFYDAEQLSRIVRRSASLLNAQIDPNGALEIAKRARGTPRIANRLLRRVRDFAEVKADGQITAAVADAALAMLDVDPVGFDLMDRKLLEAILYKFDGGPVGIDNLAAAIGEERDTIEDVLEPYLIQQGFLQRTPRGRVATLLTYRHFGLSVPDARRTERDEWDTPDGK</sequence>